<gene>
    <name evidence="1" type="primary">trpD</name>
    <name type="ordered locus">SYNW1025</name>
</gene>
<comment type="function">
    <text evidence="1">Catalyzes the transfer of the phosphoribosyl group of 5-phosphorylribose-1-pyrophosphate (PRPP) to anthranilate to yield N-(5'-phosphoribosyl)-anthranilate (PRA).</text>
</comment>
<comment type="catalytic activity">
    <reaction evidence="1">
        <text>N-(5-phospho-beta-D-ribosyl)anthranilate + diphosphate = 5-phospho-alpha-D-ribose 1-diphosphate + anthranilate</text>
        <dbReference type="Rhea" id="RHEA:11768"/>
        <dbReference type="ChEBI" id="CHEBI:16567"/>
        <dbReference type="ChEBI" id="CHEBI:18277"/>
        <dbReference type="ChEBI" id="CHEBI:33019"/>
        <dbReference type="ChEBI" id="CHEBI:58017"/>
        <dbReference type="EC" id="2.4.2.18"/>
    </reaction>
</comment>
<comment type="cofactor">
    <cofactor evidence="1">
        <name>Mg(2+)</name>
        <dbReference type="ChEBI" id="CHEBI:18420"/>
    </cofactor>
    <text evidence="1">Binds 2 magnesium ions per monomer.</text>
</comment>
<comment type="pathway">
    <text evidence="1">Amino-acid biosynthesis; L-tryptophan biosynthesis; L-tryptophan from chorismate: step 2/5.</text>
</comment>
<comment type="subunit">
    <text evidence="1">Homodimer.</text>
</comment>
<comment type="similarity">
    <text evidence="1">Belongs to the anthranilate phosphoribosyltransferase family.</text>
</comment>
<protein>
    <recommendedName>
        <fullName evidence="1">Anthranilate phosphoribosyltransferase</fullName>
        <ecNumber evidence="1">2.4.2.18</ecNumber>
    </recommendedName>
</protein>
<accession>Q7TTV4</accession>
<dbReference type="EC" id="2.4.2.18" evidence="1"/>
<dbReference type="EMBL" id="BX569691">
    <property type="protein sequence ID" value="CAE07540.1"/>
    <property type="molecule type" value="Genomic_DNA"/>
</dbReference>
<dbReference type="SMR" id="Q7TTV4"/>
<dbReference type="STRING" id="84588.SYNW1025"/>
<dbReference type="KEGG" id="syw:SYNW1025"/>
<dbReference type="eggNOG" id="COG0547">
    <property type="taxonomic scope" value="Bacteria"/>
</dbReference>
<dbReference type="HOGENOM" id="CLU_034315_2_1_3"/>
<dbReference type="UniPathway" id="UPA00035">
    <property type="reaction ID" value="UER00041"/>
</dbReference>
<dbReference type="Proteomes" id="UP000001422">
    <property type="component" value="Chromosome"/>
</dbReference>
<dbReference type="GO" id="GO:0005829">
    <property type="term" value="C:cytosol"/>
    <property type="evidence" value="ECO:0007669"/>
    <property type="project" value="TreeGrafter"/>
</dbReference>
<dbReference type="GO" id="GO:0004048">
    <property type="term" value="F:anthranilate phosphoribosyltransferase activity"/>
    <property type="evidence" value="ECO:0007669"/>
    <property type="project" value="UniProtKB-UniRule"/>
</dbReference>
<dbReference type="GO" id="GO:0000287">
    <property type="term" value="F:magnesium ion binding"/>
    <property type="evidence" value="ECO:0007669"/>
    <property type="project" value="UniProtKB-UniRule"/>
</dbReference>
<dbReference type="GO" id="GO:0000162">
    <property type="term" value="P:L-tryptophan biosynthetic process"/>
    <property type="evidence" value="ECO:0007669"/>
    <property type="project" value="UniProtKB-UniRule"/>
</dbReference>
<dbReference type="FunFam" id="3.40.1030.10:FF:000002">
    <property type="entry name" value="Anthranilate phosphoribosyltransferase"/>
    <property type="match status" value="1"/>
</dbReference>
<dbReference type="Gene3D" id="3.40.1030.10">
    <property type="entry name" value="Nucleoside phosphorylase/phosphoribosyltransferase catalytic domain"/>
    <property type="match status" value="1"/>
</dbReference>
<dbReference type="Gene3D" id="1.20.970.10">
    <property type="entry name" value="Transferase, Pyrimidine Nucleoside Phosphorylase, Chain C"/>
    <property type="match status" value="1"/>
</dbReference>
<dbReference type="HAMAP" id="MF_00211">
    <property type="entry name" value="TrpD"/>
    <property type="match status" value="1"/>
</dbReference>
<dbReference type="InterPro" id="IPR005940">
    <property type="entry name" value="Anthranilate_Pribosyl_Tfrase"/>
</dbReference>
<dbReference type="InterPro" id="IPR000312">
    <property type="entry name" value="Glycosyl_Trfase_fam3"/>
</dbReference>
<dbReference type="InterPro" id="IPR017459">
    <property type="entry name" value="Glycosyl_Trfase_fam3_N_dom"/>
</dbReference>
<dbReference type="InterPro" id="IPR036320">
    <property type="entry name" value="Glycosyl_Trfase_fam3_N_dom_sf"/>
</dbReference>
<dbReference type="InterPro" id="IPR035902">
    <property type="entry name" value="Nuc_phospho_transferase"/>
</dbReference>
<dbReference type="NCBIfam" id="TIGR01245">
    <property type="entry name" value="trpD"/>
    <property type="match status" value="1"/>
</dbReference>
<dbReference type="PANTHER" id="PTHR43285">
    <property type="entry name" value="ANTHRANILATE PHOSPHORIBOSYLTRANSFERASE"/>
    <property type="match status" value="1"/>
</dbReference>
<dbReference type="PANTHER" id="PTHR43285:SF2">
    <property type="entry name" value="ANTHRANILATE PHOSPHORIBOSYLTRANSFERASE"/>
    <property type="match status" value="1"/>
</dbReference>
<dbReference type="Pfam" id="PF02885">
    <property type="entry name" value="Glycos_trans_3N"/>
    <property type="match status" value="1"/>
</dbReference>
<dbReference type="Pfam" id="PF00591">
    <property type="entry name" value="Glycos_transf_3"/>
    <property type="match status" value="1"/>
</dbReference>
<dbReference type="SUPFAM" id="SSF52418">
    <property type="entry name" value="Nucleoside phosphorylase/phosphoribosyltransferase catalytic domain"/>
    <property type="match status" value="1"/>
</dbReference>
<dbReference type="SUPFAM" id="SSF47648">
    <property type="entry name" value="Nucleoside phosphorylase/phosphoribosyltransferase N-terminal domain"/>
    <property type="match status" value="1"/>
</dbReference>
<keyword id="KW-0028">Amino-acid biosynthesis</keyword>
<keyword id="KW-0057">Aromatic amino acid biosynthesis</keyword>
<keyword id="KW-0328">Glycosyltransferase</keyword>
<keyword id="KW-0460">Magnesium</keyword>
<keyword id="KW-0479">Metal-binding</keyword>
<keyword id="KW-0808">Transferase</keyword>
<keyword id="KW-0822">Tryptophan biosynthesis</keyword>
<proteinExistence type="inferred from homology"/>
<reference key="1">
    <citation type="journal article" date="2003" name="Nature">
        <title>The genome of a motile marine Synechococcus.</title>
        <authorList>
            <person name="Palenik B."/>
            <person name="Brahamsha B."/>
            <person name="Larimer F.W."/>
            <person name="Land M.L."/>
            <person name="Hauser L."/>
            <person name="Chain P."/>
            <person name="Lamerdin J.E."/>
            <person name="Regala W."/>
            <person name="Allen E.E."/>
            <person name="McCarren J."/>
            <person name="Paulsen I.T."/>
            <person name="Dufresne A."/>
            <person name="Partensky F."/>
            <person name="Webb E.A."/>
            <person name="Waterbury J."/>
        </authorList>
    </citation>
    <scope>NUCLEOTIDE SEQUENCE [LARGE SCALE GENOMIC DNA]</scope>
    <source>
        <strain>WH8102</strain>
    </source>
</reference>
<sequence length="350" mass="36233">MGSFRCMSPASPSWSGLLELLLCGESLSAAQATDLMQAWLSESLTPVQTGAFLAGLRAKGMEAEELAAMAAVLREACPLPCARPDRFLVDTCGTGGDGADTFNISTAVAFTAAACGVEVAKHGNRSASGKVGSADVLEGLGLNLKAPLQLVVDAIPAAGVTFLFAPAWHPALVNLAPLRRSLGVRTVFNLLGPLVNPLKPQAQVLGVAKKDLLDPMAGALQRLGLERAVVVHGAGGLDEASLAGPNDLRFIEAGAIRSLQLSPDELGLATADLETLKGGDLDCNQTILQQVLQGRGEPAQRDVVALNTALVLWAAGIDTDLSSAAARAAEALDQGLPWTRLETLRQHLAS</sequence>
<organism>
    <name type="scientific">Parasynechococcus marenigrum (strain WH8102)</name>
    <dbReference type="NCBI Taxonomy" id="84588"/>
    <lineage>
        <taxon>Bacteria</taxon>
        <taxon>Bacillati</taxon>
        <taxon>Cyanobacteriota</taxon>
        <taxon>Cyanophyceae</taxon>
        <taxon>Synechococcales</taxon>
        <taxon>Prochlorococcaceae</taxon>
        <taxon>Parasynechococcus</taxon>
        <taxon>Parasynechococcus marenigrum</taxon>
    </lineage>
</organism>
<evidence type="ECO:0000255" key="1">
    <source>
        <dbReference type="HAMAP-Rule" id="MF_00211"/>
    </source>
</evidence>
<feature type="chain" id="PRO_0000227194" description="Anthranilate phosphoribosyltransferase">
    <location>
        <begin position="1"/>
        <end position="350"/>
    </location>
</feature>
<feature type="binding site" evidence="1">
    <location>
        <position position="93"/>
    </location>
    <ligand>
        <name>5-phospho-alpha-D-ribose 1-diphosphate</name>
        <dbReference type="ChEBI" id="CHEBI:58017"/>
    </ligand>
</feature>
<feature type="binding site" evidence="1">
    <location>
        <position position="93"/>
    </location>
    <ligand>
        <name>anthranilate</name>
        <dbReference type="ChEBI" id="CHEBI:16567"/>
        <label>1</label>
    </ligand>
</feature>
<feature type="binding site" evidence="1">
    <location>
        <begin position="96"/>
        <end position="97"/>
    </location>
    <ligand>
        <name>5-phospho-alpha-D-ribose 1-diphosphate</name>
        <dbReference type="ChEBI" id="CHEBI:58017"/>
    </ligand>
</feature>
<feature type="binding site" evidence="1">
    <location>
        <position position="101"/>
    </location>
    <ligand>
        <name>5-phospho-alpha-D-ribose 1-diphosphate</name>
        <dbReference type="ChEBI" id="CHEBI:58017"/>
    </ligand>
</feature>
<feature type="binding site" evidence="1">
    <location>
        <begin position="103"/>
        <end position="106"/>
    </location>
    <ligand>
        <name>5-phospho-alpha-D-ribose 1-diphosphate</name>
        <dbReference type="ChEBI" id="CHEBI:58017"/>
    </ligand>
</feature>
<feature type="binding site" evidence="1">
    <location>
        <position position="105"/>
    </location>
    <ligand>
        <name>Mg(2+)</name>
        <dbReference type="ChEBI" id="CHEBI:18420"/>
        <label>1</label>
    </ligand>
</feature>
<feature type="binding site" evidence="1">
    <location>
        <begin position="121"/>
        <end position="129"/>
    </location>
    <ligand>
        <name>5-phospho-alpha-D-ribose 1-diphosphate</name>
        <dbReference type="ChEBI" id="CHEBI:58017"/>
    </ligand>
</feature>
<feature type="binding site" evidence="1">
    <location>
        <position position="124"/>
    </location>
    <ligand>
        <name>anthranilate</name>
        <dbReference type="ChEBI" id="CHEBI:16567"/>
        <label>1</label>
    </ligand>
</feature>
<feature type="binding site" evidence="1">
    <location>
        <position position="133"/>
    </location>
    <ligand>
        <name>5-phospho-alpha-D-ribose 1-diphosphate</name>
        <dbReference type="ChEBI" id="CHEBI:58017"/>
    </ligand>
</feature>
<feature type="binding site" evidence="1">
    <location>
        <position position="179"/>
    </location>
    <ligand>
        <name>anthranilate</name>
        <dbReference type="ChEBI" id="CHEBI:16567"/>
        <label>2</label>
    </ligand>
</feature>
<feature type="binding site" evidence="1">
    <location>
        <position position="238"/>
    </location>
    <ligand>
        <name>Mg(2+)</name>
        <dbReference type="ChEBI" id="CHEBI:18420"/>
        <label>2</label>
    </ligand>
</feature>
<feature type="binding site" evidence="1">
    <location>
        <position position="239"/>
    </location>
    <ligand>
        <name>Mg(2+)</name>
        <dbReference type="ChEBI" id="CHEBI:18420"/>
        <label>1</label>
    </ligand>
</feature>
<feature type="binding site" evidence="1">
    <location>
        <position position="239"/>
    </location>
    <ligand>
        <name>Mg(2+)</name>
        <dbReference type="ChEBI" id="CHEBI:18420"/>
        <label>2</label>
    </ligand>
</feature>
<name>TRPD_PARMW</name>